<organism>
    <name type="scientific">Pseudoalteromonas atlantica (strain T6c / ATCC BAA-1087)</name>
    <dbReference type="NCBI Taxonomy" id="3042615"/>
    <lineage>
        <taxon>Bacteria</taxon>
        <taxon>Pseudomonadati</taxon>
        <taxon>Pseudomonadota</taxon>
        <taxon>Gammaproteobacteria</taxon>
        <taxon>Alteromonadales</taxon>
        <taxon>Alteromonadaceae</taxon>
        <taxon>Paraglaciecola</taxon>
    </lineage>
</organism>
<proteinExistence type="inferred from homology"/>
<gene>
    <name evidence="1" type="primary">nqrE</name>
    <name type="ordered locus">Patl_0456</name>
</gene>
<reference key="1">
    <citation type="submission" date="2006-06" db="EMBL/GenBank/DDBJ databases">
        <title>Complete sequence of Pseudoalteromonas atlantica T6c.</title>
        <authorList>
            <consortium name="US DOE Joint Genome Institute"/>
            <person name="Copeland A."/>
            <person name="Lucas S."/>
            <person name="Lapidus A."/>
            <person name="Barry K."/>
            <person name="Detter J.C."/>
            <person name="Glavina del Rio T."/>
            <person name="Hammon N."/>
            <person name="Israni S."/>
            <person name="Dalin E."/>
            <person name="Tice H."/>
            <person name="Pitluck S."/>
            <person name="Saunders E."/>
            <person name="Brettin T."/>
            <person name="Bruce D."/>
            <person name="Han C."/>
            <person name="Tapia R."/>
            <person name="Gilna P."/>
            <person name="Schmutz J."/>
            <person name="Larimer F."/>
            <person name="Land M."/>
            <person name="Hauser L."/>
            <person name="Kyrpides N."/>
            <person name="Kim E."/>
            <person name="Karls A.C."/>
            <person name="Bartlett D."/>
            <person name="Higgins B.P."/>
            <person name="Richardson P."/>
        </authorList>
    </citation>
    <scope>NUCLEOTIDE SEQUENCE [LARGE SCALE GENOMIC DNA]</scope>
    <source>
        <strain>T6c / ATCC BAA-1087</strain>
    </source>
</reference>
<dbReference type="EC" id="7.2.1.1" evidence="1"/>
<dbReference type="EMBL" id="CP000388">
    <property type="protein sequence ID" value="ABG38986.1"/>
    <property type="molecule type" value="Genomic_DNA"/>
</dbReference>
<dbReference type="RefSeq" id="WP_006992654.1">
    <property type="nucleotide sequence ID" value="NC_008228.1"/>
</dbReference>
<dbReference type="SMR" id="Q15YQ2"/>
<dbReference type="STRING" id="342610.Patl_0456"/>
<dbReference type="KEGG" id="pat:Patl_0456"/>
<dbReference type="eggNOG" id="COG2209">
    <property type="taxonomic scope" value="Bacteria"/>
</dbReference>
<dbReference type="HOGENOM" id="CLU_095255_0_0_6"/>
<dbReference type="OrthoDB" id="9803631at2"/>
<dbReference type="Proteomes" id="UP000001981">
    <property type="component" value="Chromosome"/>
</dbReference>
<dbReference type="GO" id="GO:0009276">
    <property type="term" value="C:Gram-negative-bacterium-type cell wall"/>
    <property type="evidence" value="ECO:0007669"/>
    <property type="project" value="InterPro"/>
</dbReference>
<dbReference type="GO" id="GO:0005886">
    <property type="term" value="C:plasma membrane"/>
    <property type="evidence" value="ECO:0007669"/>
    <property type="project" value="UniProtKB-SubCell"/>
</dbReference>
<dbReference type="GO" id="GO:0016655">
    <property type="term" value="F:oxidoreductase activity, acting on NAD(P)H, quinone or similar compound as acceptor"/>
    <property type="evidence" value="ECO:0007669"/>
    <property type="project" value="UniProtKB-UniRule"/>
</dbReference>
<dbReference type="GO" id="GO:0022904">
    <property type="term" value="P:respiratory electron transport chain"/>
    <property type="evidence" value="ECO:0007669"/>
    <property type="project" value="InterPro"/>
</dbReference>
<dbReference type="GO" id="GO:0006814">
    <property type="term" value="P:sodium ion transport"/>
    <property type="evidence" value="ECO:0007669"/>
    <property type="project" value="UniProtKB-UniRule"/>
</dbReference>
<dbReference type="HAMAP" id="MF_00429">
    <property type="entry name" value="NqrE"/>
    <property type="match status" value="1"/>
</dbReference>
<dbReference type="InterPro" id="IPR003667">
    <property type="entry name" value="NqrDE/RnfAE"/>
</dbReference>
<dbReference type="InterPro" id="IPR050133">
    <property type="entry name" value="NqrDE/RnfAE_oxidrdctase"/>
</dbReference>
<dbReference type="InterPro" id="IPR010967">
    <property type="entry name" value="NqrE"/>
</dbReference>
<dbReference type="NCBIfam" id="TIGR01940">
    <property type="entry name" value="nqrE"/>
    <property type="match status" value="1"/>
</dbReference>
<dbReference type="PANTHER" id="PTHR30335">
    <property type="entry name" value="INTEGRAL MEMBRANE PROTEIN OF SOXR-REDUCING COMPLEX"/>
    <property type="match status" value="1"/>
</dbReference>
<dbReference type="PANTHER" id="PTHR30335:SF1">
    <property type="entry name" value="NA(+)-TRANSLOCATING NADH-QUINONE REDUCTASE SUBUNIT E"/>
    <property type="match status" value="1"/>
</dbReference>
<dbReference type="Pfam" id="PF02508">
    <property type="entry name" value="Rnf-Nqr"/>
    <property type="match status" value="1"/>
</dbReference>
<dbReference type="PIRSF" id="PIRSF006102">
    <property type="entry name" value="NQR_DE"/>
    <property type="match status" value="1"/>
</dbReference>
<accession>Q15YQ2</accession>
<protein>
    <recommendedName>
        <fullName evidence="1">Na(+)-translocating NADH-quinone reductase subunit E</fullName>
        <shortName evidence="1">Na(+)-NQR subunit E</shortName>
        <shortName evidence="1">Na(+)-translocating NQR subunit E</shortName>
        <ecNumber evidence="1">7.2.1.1</ecNumber>
    </recommendedName>
    <alternativeName>
        <fullName evidence="1">NQR complex subunit E</fullName>
    </alternativeName>
    <alternativeName>
        <fullName evidence="1">NQR-1 subunit E</fullName>
    </alternativeName>
</protein>
<name>NQRE_PSEA6</name>
<comment type="function">
    <text evidence="1">NQR complex catalyzes the reduction of ubiquinone-1 to ubiquinol by two successive reactions, coupled with the transport of Na(+) ions from the cytoplasm to the periplasm. NqrA to NqrE are probably involved in the second step, the conversion of ubisemiquinone to ubiquinol.</text>
</comment>
<comment type="catalytic activity">
    <reaction evidence="1">
        <text>a ubiquinone + n Na(+)(in) + NADH + H(+) = a ubiquinol + n Na(+)(out) + NAD(+)</text>
        <dbReference type="Rhea" id="RHEA:47748"/>
        <dbReference type="Rhea" id="RHEA-COMP:9565"/>
        <dbReference type="Rhea" id="RHEA-COMP:9566"/>
        <dbReference type="ChEBI" id="CHEBI:15378"/>
        <dbReference type="ChEBI" id="CHEBI:16389"/>
        <dbReference type="ChEBI" id="CHEBI:17976"/>
        <dbReference type="ChEBI" id="CHEBI:29101"/>
        <dbReference type="ChEBI" id="CHEBI:57540"/>
        <dbReference type="ChEBI" id="CHEBI:57945"/>
        <dbReference type="EC" id="7.2.1.1"/>
    </reaction>
</comment>
<comment type="subunit">
    <text evidence="1">Composed of six subunits; NqrA, NqrB, NqrC, NqrD, NqrE and NqrF.</text>
</comment>
<comment type="subcellular location">
    <subcellularLocation>
        <location evidence="1">Cell inner membrane</location>
        <topology evidence="1">Multi-pass membrane protein</topology>
    </subcellularLocation>
</comment>
<comment type="similarity">
    <text evidence="1">Belongs to the NqrDE/RnfAE family.</text>
</comment>
<evidence type="ECO:0000255" key="1">
    <source>
        <dbReference type="HAMAP-Rule" id="MF_00429"/>
    </source>
</evidence>
<keyword id="KW-0997">Cell inner membrane</keyword>
<keyword id="KW-1003">Cell membrane</keyword>
<keyword id="KW-0406">Ion transport</keyword>
<keyword id="KW-0472">Membrane</keyword>
<keyword id="KW-0520">NAD</keyword>
<keyword id="KW-0915">Sodium</keyword>
<keyword id="KW-0739">Sodium transport</keyword>
<keyword id="KW-1278">Translocase</keyword>
<keyword id="KW-0812">Transmembrane</keyword>
<keyword id="KW-1133">Transmembrane helix</keyword>
<keyword id="KW-0813">Transport</keyword>
<keyword id="KW-0830">Ubiquinone</keyword>
<sequence>MEQYLSLFIRSIFLENMALFYFLGMCTFLAVSKKVKTAMGLGVAVIVVLTISVPVNQLVYANILAPGALGWAGFPDTDLSFLSFLTFIGVIAALVQILEMTLDKFFPALYNALGIFLPLITVNCAIFGGVAFAVQRDYTFTESIFYGAGSGAGWALAITLLAAVREKLKYADMPEGVRGLGSVFMIAGLMALGFQSFSGVSI</sequence>
<feature type="chain" id="PRO_1000060206" description="Na(+)-translocating NADH-quinone reductase subunit E">
    <location>
        <begin position="1"/>
        <end position="202"/>
    </location>
</feature>
<feature type="transmembrane region" description="Helical" evidence="1">
    <location>
        <begin position="11"/>
        <end position="31"/>
    </location>
</feature>
<feature type="transmembrane region" description="Helical" evidence="1">
    <location>
        <begin position="39"/>
        <end position="59"/>
    </location>
</feature>
<feature type="transmembrane region" description="Helical" evidence="1">
    <location>
        <begin position="79"/>
        <end position="99"/>
    </location>
</feature>
<feature type="transmembrane region" description="Helical" evidence="1">
    <location>
        <begin position="114"/>
        <end position="134"/>
    </location>
</feature>
<feature type="transmembrane region" description="Helical" evidence="1">
    <location>
        <begin position="144"/>
        <end position="164"/>
    </location>
</feature>
<feature type="transmembrane region" description="Helical" evidence="1">
    <location>
        <begin position="180"/>
        <end position="200"/>
    </location>
</feature>